<proteinExistence type="inferred from homology"/>
<feature type="chain" id="PRO_1000191648" description="Malate dehydrogenase">
    <location>
        <begin position="1"/>
        <end position="318"/>
    </location>
</feature>
<feature type="active site" description="Proton acceptor" evidence="1">
    <location>
        <position position="176"/>
    </location>
</feature>
<feature type="binding site" evidence="1">
    <location>
        <begin position="10"/>
        <end position="15"/>
    </location>
    <ligand>
        <name>NAD(+)</name>
        <dbReference type="ChEBI" id="CHEBI:57540"/>
    </ligand>
</feature>
<feature type="binding site" evidence="1">
    <location>
        <position position="34"/>
    </location>
    <ligand>
        <name>NAD(+)</name>
        <dbReference type="ChEBI" id="CHEBI:57540"/>
    </ligand>
</feature>
<feature type="binding site" evidence="1">
    <location>
        <position position="83"/>
    </location>
    <ligand>
        <name>substrate</name>
    </ligand>
</feature>
<feature type="binding site" evidence="1">
    <location>
        <position position="89"/>
    </location>
    <ligand>
        <name>substrate</name>
    </ligand>
</feature>
<feature type="binding site" evidence="1">
    <location>
        <position position="96"/>
    </location>
    <ligand>
        <name>NAD(+)</name>
        <dbReference type="ChEBI" id="CHEBI:57540"/>
    </ligand>
</feature>
<feature type="binding site" evidence="1">
    <location>
        <begin position="119"/>
        <end position="121"/>
    </location>
    <ligand>
        <name>NAD(+)</name>
        <dbReference type="ChEBI" id="CHEBI:57540"/>
    </ligand>
</feature>
<feature type="binding site" evidence="1">
    <location>
        <position position="121"/>
    </location>
    <ligand>
        <name>substrate</name>
    </ligand>
</feature>
<feature type="binding site" evidence="1">
    <location>
        <position position="152"/>
    </location>
    <ligand>
        <name>substrate</name>
    </ligand>
</feature>
<gene>
    <name evidence="1" type="primary">mdh</name>
    <name type="ordered locus">Geob_2664</name>
</gene>
<sequence length="318" mass="33438">MARKKIALIGGGQIGGVLAQLSALRELGDVVLFDIVEGLPQGKTLDIAEASPVDNFDAALTGANDYADIKGADIVIVTAGLPRKPGMSRDDLIATNAKIMQSVSEGIKQYAPNSFVIVISNPLDAMVTLCQKITGFPSSRVMGMAGVLDSARFAAFIAWELGVSVKDVNAMVLGGHGDTMVPIIRYANVNGVPVMELIERKYNGDKAKAKEVMAALVKRTQGAGGEVVGLLKTGSAFYSPASSAIAMAEAILRDQKRLLPVCALLNGEFGVKGYYVGVPCILGANGIEKIVEFSLDAEEQAMFDNSVAAVKELVDSMK</sequence>
<accession>B9M1D2</accession>
<protein>
    <recommendedName>
        <fullName evidence="1">Malate dehydrogenase</fullName>
        <ecNumber evidence="1">1.1.1.37</ecNumber>
    </recommendedName>
</protein>
<reference key="1">
    <citation type="submission" date="2009-01" db="EMBL/GenBank/DDBJ databases">
        <title>Complete sequence of Geobacter sp. FRC-32.</title>
        <authorList>
            <consortium name="US DOE Joint Genome Institute"/>
            <person name="Lucas S."/>
            <person name="Copeland A."/>
            <person name="Lapidus A."/>
            <person name="Glavina del Rio T."/>
            <person name="Dalin E."/>
            <person name="Tice H."/>
            <person name="Bruce D."/>
            <person name="Goodwin L."/>
            <person name="Pitluck S."/>
            <person name="Saunders E."/>
            <person name="Brettin T."/>
            <person name="Detter J.C."/>
            <person name="Han C."/>
            <person name="Larimer F."/>
            <person name="Land M."/>
            <person name="Hauser L."/>
            <person name="Kyrpides N."/>
            <person name="Ovchinnikova G."/>
            <person name="Kostka J."/>
            <person name="Richardson P."/>
        </authorList>
    </citation>
    <scope>NUCLEOTIDE SEQUENCE [LARGE SCALE GENOMIC DNA]</scope>
    <source>
        <strain>DSM 22248 / JCM 15807 / FRC-32</strain>
    </source>
</reference>
<dbReference type="EC" id="1.1.1.37" evidence="1"/>
<dbReference type="EMBL" id="CP001390">
    <property type="protein sequence ID" value="ACM21014.1"/>
    <property type="molecule type" value="Genomic_DNA"/>
</dbReference>
<dbReference type="RefSeq" id="WP_012647743.1">
    <property type="nucleotide sequence ID" value="NC_011979.1"/>
</dbReference>
<dbReference type="SMR" id="B9M1D2"/>
<dbReference type="STRING" id="316067.Geob_2664"/>
<dbReference type="KEGG" id="geo:Geob_2664"/>
<dbReference type="eggNOG" id="COG0039">
    <property type="taxonomic scope" value="Bacteria"/>
</dbReference>
<dbReference type="HOGENOM" id="CLU_045401_2_1_7"/>
<dbReference type="OrthoDB" id="9802969at2"/>
<dbReference type="Proteomes" id="UP000007721">
    <property type="component" value="Chromosome"/>
</dbReference>
<dbReference type="GO" id="GO:0004459">
    <property type="term" value="F:L-lactate dehydrogenase activity"/>
    <property type="evidence" value="ECO:0007669"/>
    <property type="project" value="TreeGrafter"/>
</dbReference>
<dbReference type="GO" id="GO:0030060">
    <property type="term" value="F:L-malate dehydrogenase (NAD+) activity"/>
    <property type="evidence" value="ECO:0007669"/>
    <property type="project" value="UniProtKB-UniRule"/>
</dbReference>
<dbReference type="GO" id="GO:0006089">
    <property type="term" value="P:lactate metabolic process"/>
    <property type="evidence" value="ECO:0007669"/>
    <property type="project" value="TreeGrafter"/>
</dbReference>
<dbReference type="GO" id="GO:0006099">
    <property type="term" value="P:tricarboxylic acid cycle"/>
    <property type="evidence" value="ECO:0007669"/>
    <property type="project" value="UniProtKB-UniRule"/>
</dbReference>
<dbReference type="CDD" id="cd01339">
    <property type="entry name" value="LDH-like_MDH"/>
    <property type="match status" value="1"/>
</dbReference>
<dbReference type="FunFam" id="3.40.50.720:FF:000018">
    <property type="entry name" value="Malate dehydrogenase"/>
    <property type="match status" value="1"/>
</dbReference>
<dbReference type="FunFam" id="3.90.110.10:FF:000004">
    <property type="entry name" value="Malate dehydrogenase"/>
    <property type="match status" value="1"/>
</dbReference>
<dbReference type="Gene3D" id="3.90.110.10">
    <property type="entry name" value="Lactate dehydrogenase/glycoside hydrolase, family 4, C-terminal"/>
    <property type="match status" value="1"/>
</dbReference>
<dbReference type="Gene3D" id="3.40.50.720">
    <property type="entry name" value="NAD(P)-binding Rossmann-like Domain"/>
    <property type="match status" value="1"/>
</dbReference>
<dbReference type="HAMAP" id="MF_00487">
    <property type="entry name" value="Malate_dehydrog_3"/>
    <property type="match status" value="1"/>
</dbReference>
<dbReference type="InterPro" id="IPR001557">
    <property type="entry name" value="L-lactate/malate_DH"/>
</dbReference>
<dbReference type="InterPro" id="IPR022383">
    <property type="entry name" value="Lactate/malate_DH_C"/>
</dbReference>
<dbReference type="InterPro" id="IPR001236">
    <property type="entry name" value="Lactate/malate_DH_N"/>
</dbReference>
<dbReference type="InterPro" id="IPR015955">
    <property type="entry name" value="Lactate_DH/Glyco_Ohase_4_C"/>
</dbReference>
<dbReference type="InterPro" id="IPR011275">
    <property type="entry name" value="Malate_DH_type3"/>
</dbReference>
<dbReference type="InterPro" id="IPR036291">
    <property type="entry name" value="NAD(P)-bd_dom_sf"/>
</dbReference>
<dbReference type="NCBIfam" id="TIGR01763">
    <property type="entry name" value="MalateDH_bact"/>
    <property type="match status" value="1"/>
</dbReference>
<dbReference type="NCBIfam" id="NF004863">
    <property type="entry name" value="PRK06223.1"/>
    <property type="match status" value="1"/>
</dbReference>
<dbReference type="PANTHER" id="PTHR43128">
    <property type="entry name" value="L-2-HYDROXYCARBOXYLATE DEHYDROGENASE (NAD(P)(+))"/>
    <property type="match status" value="1"/>
</dbReference>
<dbReference type="PANTHER" id="PTHR43128:SF16">
    <property type="entry name" value="L-LACTATE DEHYDROGENASE"/>
    <property type="match status" value="1"/>
</dbReference>
<dbReference type="Pfam" id="PF02866">
    <property type="entry name" value="Ldh_1_C"/>
    <property type="match status" value="1"/>
</dbReference>
<dbReference type="Pfam" id="PF00056">
    <property type="entry name" value="Ldh_1_N"/>
    <property type="match status" value="1"/>
</dbReference>
<dbReference type="PIRSF" id="PIRSF000102">
    <property type="entry name" value="Lac_mal_DH"/>
    <property type="match status" value="1"/>
</dbReference>
<dbReference type="PRINTS" id="PR00086">
    <property type="entry name" value="LLDHDRGNASE"/>
</dbReference>
<dbReference type="SUPFAM" id="SSF56327">
    <property type="entry name" value="LDH C-terminal domain-like"/>
    <property type="match status" value="1"/>
</dbReference>
<dbReference type="SUPFAM" id="SSF51735">
    <property type="entry name" value="NAD(P)-binding Rossmann-fold domains"/>
    <property type="match status" value="1"/>
</dbReference>
<comment type="function">
    <text evidence="1">Catalyzes the reversible oxidation of malate to oxaloacetate.</text>
</comment>
<comment type="catalytic activity">
    <reaction evidence="1">
        <text>(S)-malate + NAD(+) = oxaloacetate + NADH + H(+)</text>
        <dbReference type="Rhea" id="RHEA:21432"/>
        <dbReference type="ChEBI" id="CHEBI:15378"/>
        <dbReference type="ChEBI" id="CHEBI:15589"/>
        <dbReference type="ChEBI" id="CHEBI:16452"/>
        <dbReference type="ChEBI" id="CHEBI:57540"/>
        <dbReference type="ChEBI" id="CHEBI:57945"/>
        <dbReference type="EC" id="1.1.1.37"/>
    </reaction>
</comment>
<comment type="similarity">
    <text evidence="1">Belongs to the LDH/MDH superfamily. MDH type 3 family.</text>
</comment>
<organism>
    <name type="scientific">Geotalea daltonii (strain DSM 22248 / JCM 15807 / FRC-32)</name>
    <name type="common">Geobacter daltonii</name>
    <dbReference type="NCBI Taxonomy" id="316067"/>
    <lineage>
        <taxon>Bacteria</taxon>
        <taxon>Pseudomonadati</taxon>
        <taxon>Thermodesulfobacteriota</taxon>
        <taxon>Desulfuromonadia</taxon>
        <taxon>Geobacterales</taxon>
        <taxon>Geobacteraceae</taxon>
        <taxon>Geotalea</taxon>
    </lineage>
</organism>
<evidence type="ECO:0000255" key="1">
    <source>
        <dbReference type="HAMAP-Rule" id="MF_00487"/>
    </source>
</evidence>
<keyword id="KW-0520">NAD</keyword>
<keyword id="KW-0560">Oxidoreductase</keyword>
<keyword id="KW-1185">Reference proteome</keyword>
<keyword id="KW-0816">Tricarboxylic acid cycle</keyword>
<name>MDH_GEODF</name>